<name>LAP1_DROME</name>
<accession>Q9V780</accession>
<proteinExistence type="evidence at transcript level"/>
<keyword id="KW-0433">Leucine-rich repeat</keyword>
<keyword id="KW-1185">Reference proteome</keyword>
<keyword id="KW-0677">Repeat</keyword>
<protein>
    <recommendedName>
        <fullName>Protein lap1</fullName>
    </recommendedName>
</protein>
<evidence type="ECO:0000250" key="1">
    <source>
        <dbReference type="UniProtKB" id="O61967"/>
    </source>
</evidence>
<evidence type="ECO:0000255" key="2"/>
<evidence type="ECO:0000255" key="3">
    <source>
        <dbReference type="PROSITE-ProRule" id="PRU00143"/>
    </source>
</evidence>
<evidence type="ECO:0000256" key="4">
    <source>
        <dbReference type="SAM" id="MobiDB-lite"/>
    </source>
</evidence>
<evidence type="ECO:0000269" key="5">
    <source>
    </source>
</evidence>
<evidence type="ECO:0000305" key="6"/>
<evidence type="ECO:0000312" key="7">
    <source>
        <dbReference type="EMBL" id="AAF58179.1"/>
    </source>
</evidence>
<evidence type="ECO:0000312" key="8">
    <source>
        <dbReference type="EMBL" id="AAR96157.1"/>
    </source>
</evidence>
<sequence>MPLLSKCFPCFKFKREEVIDKLDYSNTPLTDFPEVWQHERTLEELYLSTTRLQALPPQLFYCQGLRVLHVNSNNLESIPQAIGSLRQLQHLDLNRNLIVNVPEEIKSCKHLTHLDLSCNSLQRLPDAITSLISLQELLLNETYLEFLPANFGRLVNLRILELRLNNLMTLPKSMVRLINLQRLDIGGNEFTELPEVVGELKSLRELWIDFNQIRRVSANIGKLRDLQHFEANGNLLDTLPSELSNWRNVEVLSICSNSLEAFPFSVGMLKSLVTFKCESNGLTELPDSISYLEQLEELVLSHNKLIRLPSTIGMLRSLRFLFADDNQLRQLPDELCSCQQLSVLSVANNQLSALPQNIGNLSKMKVLNVVNNYINALPVSMLNLVNLTSMWLSDNQSQPLVPLQYLDASTKTQLTCFMLPQVTFKMNSIQAQQQAQEQYEFVYANQQQPHASPSRRICFAEEATILSNAKAQPAPNYPSFVAAPPTPTPDQMAGSVRLMRSPTPYPKELRQMSKYVRQAQAATSSANASEVREARVVTNGQIHCDSNNANQDVVDQATTSAIYGIAPETTHIYGVYQQPQQMAHPVPTQEYYGLPLVNYEAHYQQLYVEANTPLPTTHLNGDQDYELQPLQQQPMQQQALPTPRLEPPPYHIARVYTKKTPEDLNLYESMRQRKQQQQLQEQTIYQDALNSNSNFKTTAIGAQDVEESVDQLDYQNNISNNLEPNPEEEDQELDDTMSQHSLNSTATNNTSKASHKKSTWIFGVHKNPTVKQVTLKWENSIGFDIAELLNQVGIFVSSITPNTNAARLLNLNDKLLEIDGYDLTNANLSDAKRVLLNCGTVMNIMLSRK</sequence>
<feature type="chain" id="PRO_0000188306" description="Protein lap1">
    <location>
        <begin position="1"/>
        <end position="849"/>
    </location>
</feature>
<feature type="repeat" description="LRR 1">
    <location>
        <begin position="18"/>
        <end position="39"/>
    </location>
</feature>
<feature type="repeat" description="LRR 2">
    <location>
        <begin position="41"/>
        <end position="62"/>
    </location>
</feature>
<feature type="repeat" description="LRR 3">
    <location>
        <begin position="64"/>
        <end position="85"/>
    </location>
</feature>
<feature type="repeat" description="LRR 4">
    <location>
        <begin position="87"/>
        <end position="108"/>
    </location>
</feature>
<feature type="repeat" description="LRR 5" evidence="2">
    <location>
        <begin position="110"/>
        <end position="131"/>
    </location>
</feature>
<feature type="repeat" description="LRR 6">
    <location>
        <begin position="133"/>
        <end position="155"/>
    </location>
</feature>
<feature type="repeat" description="LRR 7">
    <location>
        <begin position="156"/>
        <end position="177"/>
    </location>
</feature>
<feature type="repeat" description="LRR 8">
    <location>
        <begin position="179"/>
        <end position="200"/>
    </location>
</feature>
<feature type="repeat" description="LRR 9">
    <location>
        <begin position="202"/>
        <end position="224"/>
    </location>
</feature>
<feature type="repeat" description="LRR 10">
    <location>
        <begin position="225"/>
        <end position="246"/>
    </location>
</feature>
<feature type="repeat" description="LRR 11">
    <location>
        <begin position="248"/>
        <end position="269"/>
    </location>
</feature>
<feature type="repeat" description="LRR 12">
    <location>
        <begin position="271"/>
        <end position="292"/>
    </location>
</feature>
<feature type="repeat" description="LRR 13">
    <location>
        <begin position="294"/>
        <end position="315"/>
    </location>
</feature>
<feature type="repeat" description="LRR 14">
    <location>
        <begin position="317"/>
        <end position="338"/>
    </location>
</feature>
<feature type="repeat" description="LRR 15">
    <location>
        <begin position="340"/>
        <end position="362"/>
    </location>
</feature>
<feature type="repeat" description="LRR 16" evidence="2">
    <location>
        <begin position="363"/>
        <end position="384"/>
    </location>
</feature>
<feature type="repeat" description="LRR 17">
    <location>
        <begin position="386"/>
        <end position="407"/>
    </location>
</feature>
<feature type="domain" description="PDZ" evidence="3">
    <location>
        <begin position="770"/>
        <end position="849"/>
    </location>
</feature>
<feature type="region of interest" description="Disordered" evidence="4">
    <location>
        <begin position="716"/>
        <end position="752"/>
    </location>
</feature>
<feature type="compositionally biased region" description="Acidic residues" evidence="4">
    <location>
        <begin position="725"/>
        <end position="735"/>
    </location>
</feature>
<feature type="compositionally biased region" description="Polar residues" evidence="4">
    <location>
        <begin position="736"/>
        <end position="752"/>
    </location>
</feature>
<organism>
    <name type="scientific">Drosophila melanogaster</name>
    <name type="common">Fruit fly</name>
    <dbReference type="NCBI Taxonomy" id="7227"/>
    <lineage>
        <taxon>Eukaryota</taxon>
        <taxon>Metazoa</taxon>
        <taxon>Ecdysozoa</taxon>
        <taxon>Arthropoda</taxon>
        <taxon>Hexapoda</taxon>
        <taxon>Insecta</taxon>
        <taxon>Pterygota</taxon>
        <taxon>Neoptera</taxon>
        <taxon>Endopterygota</taxon>
        <taxon>Diptera</taxon>
        <taxon>Brachycera</taxon>
        <taxon>Muscomorpha</taxon>
        <taxon>Ephydroidea</taxon>
        <taxon>Drosophilidae</taxon>
        <taxon>Drosophila</taxon>
        <taxon>Sophophora</taxon>
    </lineage>
</organism>
<comment type="function">
    <text evidence="1">May have a role in assembling adherens junctions.</text>
</comment>
<comment type="similarity">
    <text evidence="6">Belongs to the LAP (LRR and PDZ) protein family.</text>
</comment>
<reference evidence="7" key="1">
    <citation type="journal article" date="2000" name="Science">
        <title>The genome sequence of Drosophila melanogaster.</title>
        <authorList>
            <person name="Adams M.D."/>
            <person name="Celniker S.E."/>
            <person name="Holt R.A."/>
            <person name="Evans C.A."/>
            <person name="Gocayne J.D."/>
            <person name="Amanatides P.G."/>
            <person name="Scherer S.E."/>
            <person name="Li P.W."/>
            <person name="Hoskins R.A."/>
            <person name="Galle R.F."/>
            <person name="George R.A."/>
            <person name="Lewis S.E."/>
            <person name="Richards S."/>
            <person name="Ashburner M."/>
            <person name="Henderson S.N."/>
            <person name="Sutton G.G."/>
            <person name="Wortman J.R."/>
            <person name="Yandell M.D."/>
            <person name="Zhang Q."/>
            <person name="Chen L.X."/>
            <person name="Brandon R.C."/>
            <person name="Rogers Y.-H.C."/>
            <person name="Blazej R.G."/>
            <person name="Champe M."/>
            <person name="Pfeiffer B.D."/>
            <person name="Wan K.H."/>
            <person name="Doyle C."/>
            <person name="Baxter E.G."/>
            <person name="Helt G."/>
            <person name="Nelson C.R."/>
            <person name="Miklos G.L.G."/>
            <person name="Abril J.F."/>
            <person name="Agbayani A."/>
            <person name="An H.-J."/>
            <person name="Andrews-Pfannkoch C."/>
            <person name="Baldwin D."/>
            <person name="Ballew R.M."/>
            <person name="Basu A."/>
            <person name="Baxendale J."/>
            <person name="Bayraktaroglu L."/>
            <person name="Beasley E.M."/>
            <person name="Beeson K.Y."/>
            <person name="Benos P.V."/>
            <person name="Berman B.P."/>
            <person name="Bhandari D."/>
            <person name="Bolshakov S."/>
            <person name="Borkova D."/>
            <person name="Botchan M.R."/>
            <person name="Bouck J."/>
            <person name="Brokstein P."/>
            <person name="Brottier P."/>
            <person name="Burtis K.C."/>
            <person name="Busam D.A."/>
            <person name="Butler H."/>
            <person name="Cadieu E."/>
            <person name="Center A."/>
            <person name="Chandra I."/>
            <person name="Cherry J.M."/>
            <person name="Cawley S."/>
            <person name="Dahlke C."/>
            <person name="Davenport L.B."/>
            <person name="Davies P."/>
            <person name="de Pablos B."/>
            <person name="Delcher A."/>
            <person name="Deng Z."/>
            <person name="Mays A.D."/>
            <person name="Dew I."/>
            <person name="Dietz S.M."/>
            <person name="Dodson K."/>
            <person name="Doup L.E."/>
            <person name="Downes M."/>
            <person name="Dugan-Rocha S."/>
            <person name="Dunkov B.C."/>
            <person name="Dunn P."/>
            <person name="Durbin K.J."/>
            <person name="Evangelista C.C."/>
            <person name="Ferraz C."/>
            <person name="Ferriera S."/>
            <person name="Fleischmann W."/>
            <person name="Fosler C."/>
            <person name="Gabrielian A.E."/>
            <person name="Garg N.S."/>
            <person name="Gelbart W.M."/>
            <person name="Glasser K."/>
            <person name="Glodek A."/>
            <person name="Gong F."/>
            <person name="Gorrell J.H."/>
            <person name="Gu Z."/>
            <person name="Guan P."/>
            <person name="Harris M."/>
            <person name="Harris N.L."/>
            <person name="Harvey D.A."/>
            <person name="Heiman T.J."/>
            <person name="Hernandez J.R."/>
            <person name="Houck J."/>
            <person name="Hostin D."/>
            <person name="Houston K.A."/>
            <person name="Howland T.J."/>
            <person name="Wei M.-H."/>
            <person name="Ibegwam C."/>
            <person name="Jalali M."/>
            <person name="Kalush F."/>
            <person name="Karpen G.H."/>
            <person name="Ke Z."/>
            <person name="Kennison J.A."/>
            <person name="Ketchum K.A."/>
            <person name="Kimmel B.E."/>
            <person name="Kodira C.D."/>
            <person name="Kraft C.L."/>
            <person name="Kravitz S."/>
            <person name="Kulp D."/>
            <person name="Lai Z."/>
            <person name="Lasko P."/>
            <person name="Lei Y."/>
            <person name="Levitsky A.A."/>
            <person name="Li J.H."/>
            <person name="Li Z."/>
            <person name="Liang Y."/>
            <person name="Lin X."/>
            <person name="Liu X."/>
            <person name="Mattei B."/>
            <person name="McIntosh T.C."/>
            <person name="McLeod M.P."/>
            <person name="McPherson D."/>
            <person name="Merkulov G."/>
            <person name="Milshina N.V."/>
            <person name="Mobarry C."/>
            <person name="Morris J."/>
            <person name="Moshrefi A."/>
            <person name="Mount S.M."/>
            <person name="Moy M."/>
            <person name="Murphy B."/>
            <person name="Murphy L."/>
            <person name="Muzny D.M."/>
            <person name="Nelson D.L."/>
            <person name="Nelson D.R."/>
            <person name="Nelson K.A."/>
            <person name="Nixon K."/>
            <person name="Nusskern D.R."/>
            <person name="Pacleb J.M."/>
            <person name="Palazzolo M."/>
            <person name="Pittman G.S."/>
            <person name="Pan S."/>
            <person name="Pollard J."/>
            <person name="Puri V."/>
            <person name="Reese M.G."/>
            <person name="Reinert K."/>
            <person name="Remington K."/>
            <person name="Saunders R.D.C."/>
            <person name="Scheeler F."/>
            <person name="Shen H."/>
            <person name="Shue B.C."/>
            <person name="Siden-Kiamos I."/>
            <person name="Simpson M."/>
            <person name="Skupski M.P."/>
            <person name="Smith T.J."/>
            <person name="Spier E."/>
            <person name="Spradling A.C."/>
            <person name="Stapleton M."/>
            <person name="Strong R."/>
            <person name="Sun E."/>
            <person name="Svirskas R."/>
            <person name="Tector C."/>
            <person name="Turner R."/>
            <person name="Venter E."/>
            <person name="Wang A.H."/>
            <person name="Wang X."/>
            <person name="Wang Z.-Y."/>
            <person name="Wassarman D.A."/>
            <person name="Weinstock G.M."/>
            <person name="Weissenbach J."/>
            <person name="Williams S.M."/>
            <person name="Woodage T."/>
            <person name="Worley K.C."/>
            <person name="Wu D."/>
            <person name="Yang S."/>
            <person name="Yao Q.A."/>
            <person name="Ye J."/>
            <person name="Yeh R.-F."/>
            <person name="Zaveri J.S."/>
            <person name="Zhan M."/>
            <person name="Zhang G."/>
            <person name="Zhao Q."/>
            <person name="Zheng L."/>
            <person name="Zheng X.H."/>
            <person name="Zhong F.N."/>
            <person name="Zhong W."/>
            <person name="Zhou X."/>
            <person name="Zhu S.C."/>
            <person name="Zhu X."/>
            <person name="Smith H.O."/>
            <person name="Gibbs R.A."/>
            <person name="Myers E.W."/>
            <person name="Rubin G.M."/>
            <person name="Venter J.C."/>
        </authorList>
    </citation>
    <scope>NUCLEOTIDE SEQUENCE [LARGE SCALE GENOMIC DNA]</scope>
    <source>
        <strain evidence="5">Berkeley</strain>
    </source>
</reference>
<reference evidence="6 7" key="2">
    <citation type="journal article" date="2002" name="Genome Biol.">
        <title>Annotation of the Drosophila melanogaster euchromatic genome: a systematic review.</title>
        <authorList>
            <person name="Misra S."/>
            <person name="Crosby M.A."/>
            <person name="Mungall C.J."/>
            <person name="Matthews B.B."/>
            <person name="Campbell K.S."/>
            <person name="Hradecky P."/>
            <person name="Huang Y."/>
            <person name="Kaminker J.S."/>
            <person name="Millburn G.H."/>
            <person name="Prochnik S.E."/>
            <person name="Smith C.D."/>
            <person name="Tupy J.L."/>
            <person name="Whitfield E.J."/>
            <person name="Bayraktaroglu L."/>
            <person name="Berman B.P."/>
            <person name="Bettencourt B.R."/>
            <person name="Celniker S.E."/>
            <person name="de Grey A.D.N.J."/>
            <person name="Drysdale R.A."/>
            <person name="Harris N.L."/>
            <person name="Richter J."/>
            <person name="Russo S."/>
            <person name="Schroeder A.J."/>
            <person name="Shu S.Q."/>
            <person name="Stapleton M."/>
            <person name="Yamada C."/>
            <person name="Ashburner M."/>
            <person name="Gelbart W.M."/>
            <person name="Rubin G.M."/>
            <person name="Lewis S.E."/>
        </authorList>
    </citation>
    <scope>GENOME REANNOTATION</scope>
    <source>
        <strain>Berkeley</strain>
    </source>
</reference>
<reference evidence="8" key="3">
    <citation type="submission" date="2004-01" db="EMBL/GenBank/DDBJ databases">
        <authorList>
            <person name="Stapleton M."/>
            <person name="Carlson J.W."/>
            <person name="Chavez C."/>
            <person name="Frise E."/>
            <person name="George R.A."/>
            <person name="Pacleb J.M."/>
            <person name="Park S."/>
            <person name="Wan K.H."/>
            <person name="Yu C."/>
            <person name="Rubin G.M."/>
            <person name="Celniker S.E."/>
        </authorList>
    </citation>
    <scope>NUCLEOTIDE SEQUENCE [LARGE SCALE MRNA]</scope>
    <source>
        <strain evidence="8">Berkeley</strain>
        <tissue>Embryo</tissue>
    </source>
</reference>
<gene>
    <name evidence="7" type="primary">Lap1</name>
    <name type="ORF">CG10255</name>
</gene>
<dbReference type="EMBL" id="AE013599">
    <property type="protein sequence ID" value="AAF58179.1"/>
    <property type="molecule type" value="Genomic_DNA"/>
</dbReference>
<dbReference type="EMBL" id="BT011365">
    <property type="protein sequence ID" value="AAR96157.1"/>
    <property type="molecule type" value="mRNA"/>
</dbReference>
<dbReference type="RefSeq" id="NP_001188938.1">
    <property type="nucleotide sequence ID" value="NM_001202009.2"/>
</dbReference>
<dbReference type="RefSeq" id="NP_611007.1">
    <property type="nucleotide sequence ID" value="NM_137163.5"/>
</dbReference>
<dbReference type="SMR" id="Q9V780"/>
<dbReference type="BioGRID" id="62412">
    <property type="interactions" value="6"/>
</dbReference>
<dbReference type="FunCoup" id="Q9V780">
    <property type="interactions" value="104"/>
</dbReference>
<dbReference type="IntAct" id="Q9V780">
    <property type="interactions" value="2"/>
</dbReference>
<dbReference type="STRING" id="7227.FBpp0086538"/>
<dbReference type="GlyGen" id="Q9V780">
    <property type="glycosylation" value="2 sites"/>
</dbReference>
<dbReference type="PaxDb" id="7227-FBpp0086538"/>
<dbReference type="DNASU" id="36670"/>
<dbReference type="EnsemblMetazoa" id="FBtr0087407">
    <property type="protein sequence ID" value="FBpp0086538"/>
    <property type="gene ID" value="FBgn0033984"/>
</dbReference>
<dbReference type="EnsemblMetazoa" id="FBtr0303759">
    <property type="protein sequence ID" value="FBpp0292771"/>
    <property type="gene ID" value="FBgn0033984"/>
</dbReference>
<dbReference type="GeneID" id="36670"/>
<dbReference type="KEGG" id="dme:Dmel_CG10255"/>
<dbReference type="UCSC" id="CG10255-RA">
    <property type="organism name" value="d. melanogaster"/>
</dbReference>
<dbReference type="AGR" id="FB:FBgn0033984"/>
<dbReference type="CTD" id="36670"/>
<dbReference type="FlyBase" id="FBgn0033984">
    <property type="gene designation" value="Lap1"/>
</dbReference>
<dbReference type="VEuPathDB" id="VectorBase:FBgn0033984"/>
<dbReference type="eggNOG" id="KOG0619">
    <property type="taxonomic scope" value="Eukaryota"/>
</dbReference>
<dbReference type="HOGENOM" id="CLU_336254_0_0_1"/>
<dbReference type="InParanoid" id="Q9V780"/>
<dbReference type="OMA" id="ACKHLTH"/>
<dbReference type="OrthoDB" id="676979at2759"/>
<dbReference type="PhylomeDB" id="Q9V780"/>
<dbReference type="SignaLink" id="Q9V780"/>
<dbReference type="BioGRID-ORCS" id="36670">
    <property type="hits" value="0 hits in 3 CRISPR screens"/>
</dbReference>
<dbReference type="GenomeRNAi" id="36670"/>
<dbReference type="PRO" id="PR:Q9V780"/>
<dbReference type="Proteomes" id="UP000000803">
    <property type="component" value="Chromosome 2R"/>
</dbReference>
<dbReference type="Bgee" id="FBgn0033984">
    <property type="expression patterns" value="Expressed in lamina monopolar neuron L5 (Drosophila) in insect head and 88 other cell types or tissues"/>
</dbReference>
<dbReference type="ExpressionAtlas" id="Q9V780">
    <property type="expression patterns" value="baseline and differential"/>
</dbReference>
<dbReference type="GO" id="GO:0007163">
    <property type="term" value="P:establishment or maintenance of cell polarity"/>
    <property type="evidence" value="ECO:0000250"/>
    <property type="project" value="UniProtKB"/>
</dbReference>
<dbReference type="GO" id="GO:0015031">
    <property type="term" value="P:protein transport"/>
    <property type="evidence" value="ECO:0000250"/>
    <property type="project" value="UniProtKB"/>
</dbReference>
<dbReference type="CDD" id="cd00136">
    <property type="entry name" value="PDZ_canonical"/>
    <property type="match status" value="1"/>
</dbReference>
<dbReference type="FunFam" id="3.80.10.10:FF:000013">
    <property type="entry name" value="Erbin isoform 7"/>
    <property type="match status" value="1"/>
</dbReference>
<dbReference type="FunFam" id="2.30.42.10:FF:000250">
    <property type="entry name" value="Lap1, isoform B"/>
    <property type="match status" value="1"/>
</dbReference>
<dbReference type="FunFam" id="3.80.10.10:FF:001516">
    <property type="entry name" value="Lap1, isoform B"/>
    <property type="match status" value="1"/>
</dbReference>
<dbReference type="Gene3D" id="2.30.42.10">
    <property type="match status" value="1"/>
</dbReference>
<dbReference type="Gene3D" id="3.80.10.10">
    <property type="entry name" value="Ribonuclease Inhibitor"/>
    <property type="match status" value="3"/>
</dbReference>
<dbReference type="InterPro" id="IPR001611">
    <property type="entry name" value="Leu-rich_rpt"/>
</dbReference>
<dbReference type="InterPro" id="IPR003591">
    <property type="entry name" value="Leu-rich_rpt_typical-subtyp"/>
</dbReference>
<dbReference type="InterPro" id="IPR032675">
    <property type="entry name" value="LRR_dom_sf"/>
</dbReference>
<dbReference type="InterPro" id="IPR055414">
    <property type="entry name" value="LRR_R13L4/SHOC2-like"/>
</dbReference>
<dbReference type="InterPro" id="IPR001478">
    <property type="entry name" value="PDZ"/>
</dbReference>
<dbReference type="InterPro" id="IPR036034">
    <property type="entry name" value="PDZ_sf"/>
</dbReference>
<dbReference type="InterPro" id="IPR050614">
    <property type="entry name" value="Synaptic_Scaffolding_LAP-MAGUK"/>
</dbReference>
<dbReference type="PANTHER" id="PTHR23119">
    <property type="entry name" value="DISCS LARGE"/>
    <property type="match status" value="1"/>
</dbReference>
<dbReference type="PANTHER" id="PTHR23119:SF50">
    <property type="entry name" value="PDZ DOMAIN-CONTAINING PROTEIN"/>
    <property type="match status" value="1"/>
</dbReference>
<dbReference type="Pfam" id="PF00560">
    <property type="entry name" value="LRR_1"/>
    <property type="match status" value="1"/>
</dbReference>
<dbReference type="Pfam" id="PF23598">
    <property type="entry name" value="LRR_14"/>
    <property type="match status" value="1"/>
</dbReference>
<dbReference type="Pfam" id="PF13855">
    <property type="entry name" value="LRR_8"/>
    <property type="match status" value="2"/>
</dbReference>
<dbReference type="Pfam" id="PF00595">
    <property type="entry name" value="PDZ"/>
    <property type="match status" value="1"/>
</dbReference>
<dbReference type="SMART" id="SM00364">
    <property type="entry name" value="LRR_BAC"/>
    <property type="match status" value="10"/>
</dbReference>
<dbReference type="SMART" id="SM00369">
    <property type="entry name" value="LRR_TYP"/>
    <property type="match status" value="13"/>
</dbReference>
<dbReference type="SMART" id="SM00228">
    <property type="entry name" value="PDZ"/>
    <property type="match status" value="1"/>
</dbReference>
<dbReference type="SUPFAM" id="SSF52058">
    <property type="entry name" value="L domain-like"/>
    <property type="match status" value="2"/>
</dbReference>
<dbReference type="SUPFAM" id="SSF50156">
    <property type="entry name" value="PDZ domain-like"/>
    <property type="match status" value="1"/>
</dbReference>
<dbReference type="PROSITE" id="PS51450">
    <property type="entry name" value="LRR"/>
    <property type="match status" value="13"/>
</dbReference>
<dbReference type="PROSITE" id="PS50106">
    <property type="entry name" value="PDZ"/>
    <property type="match status" value="1"/>
</dbReference>